<organism>
    <name type="scientific">Psychrobacter arcticus (strain DSM 17307 / VKM B-2377 / 273-4)</name>
    <dbReference type="NCBI Taxonomy" id="259536"/>
    <lineage>
        <taxon>Bacteria</taxon>
        <taxon>Pseudomonadati</taxon>
        <taxon>Pseudomonadota</taxon>
        <taxon>Gammaproteobacteria</taxon>
        <taxon>Moraxellales</taxon>
        <taxon>Moraxellaceae</taxon>
        <taxon>Psychrobacter</taxon>
    </lineage>
</organism>
<evidence type="ECO:0000255" key="1">
    <source>
        <dbReference type="HAMAP-Rule" id="MF_01013"/>
    </source>
</evidence>
<keyword id="KW-0028">Amino-acid biosynthesis</keyword>
<keyword id="KW-0963">Cytoplasm</keyword>
<keyword id="KW-0368">Histidine biosynthesis</keyword>
<keyword id="KW-0456">Lyase</keyword>
<keyword id="KW-1185">Reference proteome</keyword>
<proteinExistence type="inferred from homology"/>
<sequence length="260" mass="27848">MLAKRIIPCLDVDNGRVVKGVQFVDIKDAGDPVEVAKRYNEQGADEITFLDITATSDERDTTYHTVERMAETVFVPLTVGGGVRKIADIRNLLNAGADKVAINSAAVFTPEFVGEAAQKFGNQCIVVAIDAKRVADIEVDGIIMPRWEIFTHGGRKPTGIDAVAWARKMAELGAGELLVTSMDGDGTKKGYDLALMKQITSRVNVPVIASGGVGNLQHLAEGVLEGGVDAVLAASIFHFGEYTVQEAKAYMAAQGIQMRL</sequence>
<accession>Q4FPZ3</accession>
<reference key="1">
    <citation type="journal article" date="2010" name="Appl. Environ. Microbiol.">
        <title>The genome sequence of Psychrobacter arcticus 273-4, a psychroactive Siberian permafrost bacterium, reveals mechanisms for adaptation to low-temperature growth.</title>
        <authorList>
            <person name="Ayala-del-Rio H.L."/>
            <person name="Chain P.S."/>
            <person name="Grzymski J.J."/>
            <person name="Ponder M.A."/>
            <person name="Ivanova N."/>
            <person name="Bergholz P.W."/>
            <person name="Di Bartolo G."/>
            <person name="Hauser L."/>
            <person name="Land M."/>
            <person name="Bakermans C."/>
            <person name="Rodrigues D."/>
            <person name="Klappenbach J."/>
            <person name="Zarka D."/>
            <person name="Larimer F."/>
            <person name="Richardson P."/>
            <person name="Murray A."/>
            <person name="Thomashow M."/>
            <person name="Tiedje J.M."/>
        </authorList>
    </citation>
    <scope>NUCLEOTIDE SEQUENCE [LARGE SCALE GENOMIC DNA]</scope>
    <source>
        <strain>DSM 17307 / VKM B-2377 / 273-4</strain>
    </source>
</reference>
<feature type="chain" id="PRO_0000142213" description="Imidazole glycerol phosphate synthase subunit HisF">
    <location>
        <begin position="1"/>
        <end position="260"/>
    </location>
</feature>
<feature type="active site" evidence="1">
    <location>
        <position position="11"/>
    </location>
</feature>
<feature type="active site" evidence="1">
    <location>
        <position position="130"/>
    </location>
</feature>
<comment type="function">
    <text evidence="1">IGPS catalyzes the conversion of PRFAR and glutamine to IGP, AICAR and glutamate. The HisF subunit catalyzes the cyclization activity that produces IGP and AICAR from PRFAR using the ammonia provided by the HisH subunit.</text>
</comment>
<comment type="catalytic activity">
    <reaction evidence="1">
        <text>5-[(5-phospho-1-deoxy-D-ribulos-1-ylimino)methylamino]-1-(5-phospho-beta-D-ribosyl)imidazole-4-carboxamide + L-glutamine = D-erythro-1-(imidazol-4-yl)glycerol 3-phosphate + 5-amino-1-(5-phospho-beta-D-ribosyl)imidazole-4-carboxamide + L-glutamate + H(+)</text>
        <dbReference type="Rhea" id="RHEA:24793"/>
        <dbReference type="ChEBI" id="CHEBI:15378"/>
        <dbReference type="ChEBI" id="CHEBI:29985"/>
        <dbReference type="ChEBI" id="CHEBI:58278"/>
        <dbReference type="ChEBI" id="CHEBI:58359"/>
        <dbReference type="ChEBI" id="CHEBI:58475"/>
        <dbReference type="ChEBI" id="CHEBI:58525"/>
        <dbReference type="EC" id="4.3.2.10"/>
    </reaction>
</comment>
<comment type="pathway">
    <text evidence="1">Amino-acid biosynthesis; L-histidine biosynthesis; L-histidine from 5-phospho-alpha-D-ribose 1-diphosphate: step 5/9.</text>
</comment>
<comment type="subunit">
    <text evidence="1">Heterodimer of HisH and HisF.</text>
</comment>
<comment type="subcellular location">
    <subcellularLocation>
        <location evidence="1">Cytoplasm</location>
    </subcellularLocation>
</comment>
<comment type="similarity">
    <text evidence="1">Belongs to the HisA/HisF family.</text>
</comment>
<dbReference type="EC" id="4.3.2.10" evidence="1"/>
<dbReference type="EMBL" id="CP000082">
    <property type="protein sequence ID" value="AAZ19915.1"/>
    <property type="molecule type" value="Genomic_DNA"/>
</dbReference>
<dbReference type="RefSeq" id="WP_011281322.1">
    <property type="nucleotide sequence ID" value="NC_007204.1"/>
</dbReference>
<dbReference type="SMR" id="Q4FPZ3"/>
<dbReference type="STRING" id="259536.Psyc_2068"/>
<dbReference type="KEGG" id="par:Psyc_2068"/>
<dbReference type="eggNOG" id="COG0107">
    <property type="taxonomic scope" value="Bacteria"/>
</dbReference>
<dbReference type="HOGENOM" id="CLU_048577_4_0_6"/>
<dbReference type="OrthoDB" id="9781903at2"/>
<dbReference type="UniPathway" id="UPA00031">
    <property type="reaction ID" value="UER00010"/>
</dbReference>
<dbReference type="Proteomes" id="UP000000546">
    <property type="component" value="Chromosome"/>
</dbReference>
<dbReference type="GO" id="GO:0005737">
    <property type="term" value="C:cytoplasm"/>
    <property type="evidence" value="ECO:0007669"/>
    <property type="project" value="UniProtKB-SubCell"/>
</dbReference>
<dbReference type="GO" id="GO:0000107">
    <property type="term" value="F:imidazoleglycerol-phosphate synthase activity"/>
    <property type="evidence" value="ECO:0007669"/>
    <property type="project" value="UniProtKB-UniRule"/>
</dbReference>
<dbReference type="GO" id="GO:0016829">
    <property type="term" value="F:lyase activity"/>
    <property type="evidence" value="ECO:0007669"/>
    <property type="project" value="UniProtKB-KW"/>
</dbReference>
<dbReference type="GO" id="GO:0000105">
    <property type="term" value="P:L-histidine biosynthetic process"/>
    <property type="evidence" value="ECO:0007669"/>
    <property type="project" value="UniProtKB-UniRule"/>
</dbReference>
<dbReference type="CDD" id="cd04731">
    <property type="entry name" value="HisF"/>
    <property type="match status" value="1"/>
</dbReference>
<dbReference type="FunFam" id="3.20.20.70:FF:000006">
    <property type="entry name" value="Imidazole glycerol phosphate synthase subunit HisF"/>
    <property type="match status" value="1"/>
</dbReference>
<dbReference type="Gene3D" id="3.20.20.70">
    <property type="entry name" value="Aldolase class I"/>
    <property type="match status" value="1"/>
</dbReference>
<dbReference type="HAMAP" id="MF_01013">
    <property type="entry name" value="HisF"/>
    <property type="match status" value="1"/>
</dbReference>
<dbReference type="InterPro" id="IPR013785">
    <property type="entry name" value="Aldolase_TIM"/>
</dbReference>
<dbReference type="InterPro" id="IPR006062">
    <property type="entry name" value="His_biosynth"/>
</dbReference>
<dbReference type="InterPro" id="IPR004651">
    <property type="entry name" value="HisF"/>
</dbReference>
<dbReference type="InterPro" id="IPR050064">
    <property type="entry name" value="IGPS_HisA/HisF"/>
</dbReference>
<dbReference type="InterPro" id="IPR011060">
    <property type="entry name" value="RibuloseP-bd_barrel"/>
</dbReference>
<dbReference type="NCBIfam" id="TIGR00735">
    <property type="entry name" value="hisF"/>
    <property type="match status" value="1"/>
</dbReference>
<dbReference type="PANTHER" id="PTHR21235:SF2">
    <property type="entry name" value="IMIDAZOLE GLYCEROL PHOSPHATE SYNTHASE HISHF"/>
    <property type="match status" value="1"/>
</dbReference>
<dbReference type="PANTHER" id="PTHR21235">
    <property type="entry name" value="IMIDAZOLE GLYCEROL PHOSPHATE SYNTHASE SUBUNIT HISF/H IGP SYNTHASE SUBUNIT HISF/H"/>
    <property type="match status" value="1"/>
</dbReference>
<dbReference type="Pfam" id="PF00977">
    <property type="entry name" value="His_biosynth"/>
    <property type="match status" value="1"/>
</dbReference>
<dbReference type="SUPFAM" id="SSF51366">
    <property type="entry name" value="Ribulose-phoshate binding barrel"/>
    <property type="match status" value="1"/>
</dbReference>
<name>HIS6_PSYA2</name>
<protein>
    <recommendedName>
        <fullName evidence="1">Imidazole glycerol phosphate synthase subunit HisF</fullName>
        <ecNumber evidence="1">4.3.2.10</ecNumber>
    </recommendedName>
    <alternativeName>
        <fullName evidence="1">IGP synthase cyclase subunit</fullName>
    </alternativeName>
    <alternativeName>
        <fullName evidence="1">IGP synthase subunit HisF</fullName>
    </alternativeName>
    <alternativeName>
        <fullName evidence="1">ImGP synthase subunit HisF</fullName>
        <shortName evidence="1">IGPS subunit HisF</shortName>
    </alternativeName>
</protein>
<gene>
    <name evidence="1" type="primary">hisF</name>
    <name type="ordered locus">Psyc_2068</name>
</gene>